<protein>
    <recommendedName>
        <fullName>Uncharacterized transporter Rv2684</fullName>
    </recommendedName>
</protein>
<sequence length="429" mass="45188">MSVVAVTIFVAAYVLIASDRVNKTMVALTGAAAVVVLPVITSHDIFYSHDTGIDWDVIFLLVGMMIIVGVLRQTGVFEYTAIWAAKRARGSPLRIMILLVLVSALASALLDNVTTVLLIAPVTLLVCDRLNINTTSFLMAEVFASNIGGAATLVGDPPNIIVASRAGLTFNDFMLHLTPLVVIVLIALIAVLPRLFGSITVEADRIADVMALDEGEAIRDRGLLVKCGAVLVLVFAAFVAHPVLHIQPSLVALLGAGMLIVVSGLTRSEYLSSVEWDTLLFFAGLFIMVGALVKTGVVNDLARAATQLTGGNIVATAFLILGVSAPISGIIDNIPYVATMTPLVAELVAVMGGQPSTDTPWWALALGADFGGNLTAIGASANVVMLGIARRAGAPISFWEFTRKGAVVTAVSIALAAIYLWLRYFVLLH</sequence>
<keyword id="KW-1003">Cell membrane</keyword>
<keyword id="KW-0472">Membrane</keyword>
<keyword id="KW-1185">Reference proteome</keyword>
<keyword id="KW-0812">Transmembrane</keyword>
<keyword id="KW-1133">Transmembrane helix</keyword>
<keyword id="KW-0813">Transport</keyword>
<evidence type="ECO:0000255" key="1"/>
<evidence type="ECO:0000305" key="2"/>
<comment type="subcellular location">
    <subcellularLocation>
        <location evidence="2">Cell membrane</location>
        <topology evidence="2">Multi-pass membrane protein</topology>
    </subcellularLocation>
</comment>
<comment type="similarity">
    <text evidence="2">Belongs to the CitM (TC 2.A.11) transporter family.</text>
</comment>
<feature type="chain" id="PRO_0000172514" description="Uncharacterized transporter Rv2684">
    <location>
        <begin position="1"/>
        <end position="429"/>
    </location>
</feature>
<feature type="transmembrane region" description="Helical" evidence="1">
    <location>
        <begin position="26"/>
        <end position="46"/>
    </location>
</feature>
<feature type="transmembrane region" description="Helical" evidence="1">
    <location>
        <begin position="51"/>
        <end position="71"/>
    </location>
</feature>
<feature type="transmembrane region" description="Helical" evidence="1">
    <location>
        <begin position="99"/>
        <end position="119"/>
    </location>
</feature>
<feature type="transmembrane region" description="Helical" evidence="1">
    <location>
        <begin position="135"/>
        <end position="155"/>
    </location>
</feature>
<feature type="transmembrane region" description="Helical" evidence="1">
    <location>
        <begin position="173"/>
        <end position="193"/>
    </location>
</feature>
<feature type="transmembrane region" description="Helical" evidence="1">
    <location>
        <begin position="223"/>
        <end position="243"/>
    </location>
</feature>
<feature type="transmembrane region" description="Helical" evidence="1">
    <location>
        <begin position="278"/>
        <end position="298"/>
    </location>
</feature>
<feature type="transmembrane region" description="Helical" evidence="1">
    <location>
        <begin position="311"/>
        <end position="331"/>
    </location>
</feature>
<feature type="transmembrane region" description="Helical" evidence="1">
    <location>
        <begin position="361"/>
        <end position="381"/>
    </location>
</feature>
<feature type="transmembrane region" description="Helical" evidence="1">
    <location>
        <begin position="407"/>
        <end position="427"/>
    </location>
</feature>
<gene>
    <name type="ordered locus">Rv2684</name>
    <name type="ORF">MTCY05A6.05</name>
</gene>
<dbReference type="EMBL" id="AL123456">
    <property type="protein sequence ID" value="CCP45482.1"/>
    <property type="molecule type" value="Genomic_DNA"/>
</dbReference>
<dbReference type="PIR" id="G70528">
    <property type="entry name" value="G70528"/>
</dbReference>
<dbReference type="RefSeq" id="WP_003413894.1">
    <property type="nucleotide sequence ID" value="NZ_NVQJ01000017.1"/>
</dbReference>
<dbReference type="SMR" id="P9WPD9"/>
<dbReference type="FunCoup" id="P9WPD9">
    <property type="interactions" value="14"/>
</dbReference>
<dbReference type="STRING" id="83332.Rv2684"/>
<dbReference type="PaxDb" id="83332-Rv2684"/>
<dbReference type="DNASU" id="888366"/>
<dbReference type="KEGG" id="mtu:Rv2684"/>
<dbReference type="KEGG" id="mtv:RVBD_2684"/>
<dbReference type="TubercuList" id="Rv2684"/>
<dbReference type="eggNOG" id="COG1055">
    <property type="taxonomic scope" value="Bacteria"/>
</dbReference>
<dbReference type="InParanoid" id="P9WPD9"/>
<dbReference type="OrthoDB" id="9809303at2"/>
<dbReference type="PhylomeDB" id="P9WPD9"/>
<dbReference type="Proteomes" id="UP000001584">
    <property type="component" value="Chromosome"/>
</dbReference>
<dbReference type="GO" id="GO:0005886">
    <property type="term" value="C:plasma membrane"/>
    <property type="evidence" value="ECO:0007669"/>
    <property type="project" value="UniProtKB-SubCell"/>
</dbReference>
<dbReference type="GO" id="GO:0015105">
    <property type="term" value="F:arsenite transmembrane transporter activity"/>
    <property type="evidence" value="ECO:0007669"/>
    <property type="project" value="InterPro"/>
</dbReference>
<dbReference type="CDD" id="cd01116">
    <property type="entry name" value="P_permease"/>
    <property type="match status" value="1"/>
</dbReference>
<dbReference type="InterPro" id="IPR000802">
    <property type="entry name" value="Arsenical_pump_ArsB"/>
</dbReference>
<dbReference type="InterPro" id="IPR004680">
    <property type="entry name" value="Cit_transptr-like_dom"/>
</dbReference>
<dbReference type="InterPro" id="IPR051475">
    <property type="entry name" value="Diverse_Ion_Transporter"/>
</dbReference>
<dbReference type="PANTHER" id="PTHR43568">
    <property type="entry name" value="P PROTEIN"/>
    <property type="match status" value="1"/>
</dbReference>
<dbReference type="PANTHER" id="PTHR43568:SF1">
    <property type="entry name" value="P PROTEIN"/>
    <property type="match status" value="1"/>
</dbReference>
<dbReference type="Pfam" id="PF03600">
    <property type="entry name" value="CitMHS"/>
    <property type="match status" value="1"/>
</dbReference>
<dbReference type="PRINTS" id="PR00758">
    <property type="entry name" value="ARSENICPUMP"/>
</dbReference>
<name>Y2684_MYCTU</name>
<reference key="1">
    <citation type="journal article" date="1998" name="Nature">
        <title>Deciphering the biology of Mycobacterium tuberculosis from the complete genome sequence.</title>
        <authorList>
            <person name="Cole S.T."/>
            <person name="Brosch R."/>
            <person name="Parkhill J."/>
            <person name="Garnier T."/>
            <person name="Churcher C.M."/>
            <person name="Harris D.E."/>
            <person name="Gordon S.V."/>
            <person name="Eiglmeier K."/>
            <person name="Gas S."/>
            <person name="Barry C.E. III"/>
            <person name="Tekaia F."/>
            <person name="Badcock K."/>
            <person name="Basham D."/>
            <person name="Brown D."/>
            <person name="Chillingworth T."/>
            <person name="Connor R."/>
            <person name="Davies R.M."/>
            <person name="Devlin K."/>
            <person name="Feltwell T."/>
            <person name="Gentles S."/>
            <person name="Hamlin N."/>
            <person name="Holroyd S."/>
            <person name="Hornsby T."/>
            <person name="Jagels K."/>
            <person name="Krogh A."/>
            <person name="McLean J."/>
            <person name="Moule S."/>
            <person name="Murphy L.D."/>
            <person name="Oliver S."/>
            <person name="Osborne J."/>
            <person name="Quail M.A."/>
            <person name="Rajandream M.A."/>
            <person name="Rogers J."/>
            <person name="Rutter S."/>
            <person name="Seeger K."/>
            <person name="Skelton S."/>
            <person name="Squares S."/>
            <person name="Squares R."/>
            <person name="Sulston J.E."/>
            <person name="Taylor K."/>
            <person name="Whitehead S."/>
            <person name="Barrell B.G."/>
        </authorList>
    </citation>
    <scope>NUCLEOTIDE SEQUENCE [LARGE SCALE GENOMIC DNA]</scope>
    <source>
        <strain>ATCC 25618 / H37Rv</strain>
    </source>
</reference>
<proteinExistence type="inferred from homology"/>
<accession>P9WPD9</accession>
<accession>L0TD93</accession>
<accession>O07186</accession>
<accession>P0A606</accession>
<organism>
    <name type="scientific">Mycobacterium tuberculosis (strain ATCC 25618 / H37Rv)</name>
    <dbReference type="NCBI Taxonomy" id="83332"/>
    <lineage>
        <taxon>Bacteria</taxon>
        <taxon>Bacillati</taxon>
        <taxon>Actinomycetota</taxon>
        <taxon>Actinomycetes</taxon>
        <taxon>Mycobacteriales</taxon>
        <taxon>Mycobacteriaceae</taxon>
        <taxon>Mycobacterium</taxon>
        <taxon>Mycobacterium tuberculosis complex</taxon>
    </lineage>
</organism>